<gene>
    <name type="primary">mrh4</name>
    <name type="ORF">AN6149</name>
</gene>
<comment type="function">
    <text evidence="1">ATP-binding RNA helicase involved in mitochondrial RNA metabolism. Required for maintenance of mitochondrial DNA (By similarity).</text>
</comment>
<comment type="catalytic activity">
    <reaction>
        <text>ATP + H2O = ADP + phosphate + H(+)</text>
        <dbReference type="Rhea" id="RHEA:13065"/>
        <dbReference type="ChEBI" id="CHEBI:15377"/>
        <dbReference type="ChEBI" id="CHEBI:15378"/>
        <dbReference type="ChEBI" id="CHEBI:30616"/>
        <dbReference type="ChEBI" id="CHEBI:43474"/>
        <dbReference type="ChEBI" id="CHEBI:456216"/>
        <dbReference type="EC" id="3.6.4.13"/>
    </reaction>
</comment>
<comment type="subcellular location">
    <subcellularLocation>
        <location evidence="1">Mitochondrion</location>
    </subcellularLocation>
</comment>
<comment type="domain">
    <text>The Q motif is unique to and characteristic of the DEAD box family of RNA helicases and controls ATP binding and hydrolysis.</text>
</comment>
<comment type="similarity">
    <text evidence="6">Belongs to the DEAD box helicase family. MRH4 subfamily.</text>
</comment>
<accession>Q5AZY1</accession>
<accession>C8V2A6</accession>
<protein>
    <recommendedName>
        <fullName>ATP-dependent RNA helicase mrh4, mitochondrial</fullName>
        <ecNumber>3.6.4.13</ecNumber>
    </recommendedName>
</protein>
<feature type="transit peptide" description="Mitochondrion" evidence="2">
    <location>
        <begin position="1"/>
        <end position="46"/>
    </location>
</feature>
<feature type="chain" id="PRO_0000232353" description="ATP-dependent RNA helicase mrh4, mitochondrial">
    <location>
        <begin position="47"/>
        <end position="630"/>
    </location>
</feature>
<feature type="domain" description="Helicase ATP-binding" evidence="3">
    <location>
        <begin position="195"/>
        <end position="407"/>
    </location>
</feature>
<feature type="domain" description="Helicase C-terminal" evidence="4">
    <location>
        <begin position="452"/>
        <end position="630"/>
    </location>
</feature>
<feature type="region of interest" description="Disordered" evidence="5">
    <location>
        <begin position="46"/>
        <end position="108"/>
    </location>
</feature>
<feature type="region of interest" description="Disordered" evidence="5">
    <location>
        <begin position="235"/>
        <end position="265"/>
    </location>
</feature>
<feature type="short sequence motif" description="Q motif">
    <location>
        <begin position="167"/>
        <end position="174"/>
    </location>
</feature>
<feature type="short sequence motif" description="DEAD box">
    <location>
        <begin position="354"/>
        <end position="357"/>
    </location>
</feature>
<feature type="compositionally biased region" description="Basic and acidic residues" evidence="5">
    <location>
        <begin position="235"/>
        <end position="255"/>
    </location>
</feature>
<feature type="binding site" evidence="3">
    <location>
        <begin position="208"/>
        <end position="215"/>
    </location>
    <ligand>
        <name>ATP</name>
        <dbReference type="ChEBI" id="CHEBI:30616"/>
    </ligand>
</feature>
<evidence type="ECO:0000250" key="1"/>
<evidence type="ECO:0000255" key="2"/>
<evidence type="ECO:0000255" key="3">
    <source>
        <dbReference type="PROSITE-ProRule" id="PRU00541"/>
    </source>
</evidence>
<evidence type="ECO:0000255" key="4">
    <source>
        <dbReference type="PROSITE-ProRule" id="PRU00542"/>
    </source>
</evidence>
<evidence type="ECO:0000256" key="5">
    <source>
        <dbReference type="SAM" id="MobiDB-lite"/>
    </source>
</evidence>
<evidence type="ECO:0000305" key="6"/>
<organism>
    <name type="scientific">Emericella nidulans (strain FGSC A4 / ATCC 38163 / CBS 112.46 / NRRL 194 / M139)</name>
    <name type="common">Aspergillus nidulans</name>
    <dbReference type="NCBI Taxonomy" id="227321"/>
    <lineage>
        <taxon>Eukaryota</taxon>
        <taxon>Fungi</taxon>
        <taxon>Dikarya</taxon>
        <taxon>Ascomycota</taxon>
        <taxon>Pezizomycotina</taxon>
        <taxon>Eurotiomycetes</taxon>
        <taxon>Eurotiomycetidae</taxon>
        <taxon>Eurotiales</taxon>
        <taxon>Aspergillaceae</taxon>
        <taxon>Aspergillus</taxon>
        <taxon>Aspergillus subgen. Nidulantes</taxon>
    </lineage>
</organism>
<name>MRH4_EMENI</name>
<proteinExistence type="inferred from homology"/>
<reference key="1">
    <citation type="journal article" date="2005" name="Nature">
        <title>Sequencing of Aspergillus nidulans and comparative analysis with A. fumigatus and A. oryzae.</title>
        <authorList>
            <person name="Galagan J.E."/>
            <person name="Calvo S.E."/>
            <person name="Cuomo C."/>
            <person name="Ma L.-J."/>
            <person name="Wortman J.R."/>
            <person name="Batzoglou S."/>
            <person name="Lee S.-I."/>
            <person name="Bastuerkmen M."/>
            <person name="Spevak C.C."/>
            <person name="Clutterbuck J."/>
            <person name="Kapitonov V."/>
            <person name="Jurka J."/>
            <person name="Scazzocchio C."/>
            <person name="Farman M.L."/>
            <person name="Butler J."/>
            <person name="Purcell S."/>
            <person name="Harris S."/>
            <person name="Braus G.H."/>
            <person name="Draht O."/>
            <person name="Busch S."/>
            <person name="D'Enfert C."/>
            <person name="Bouchier C."/>
            <person name="Goldman G.H."/>
            <person name="Bell-Pedersen D."/>
            <person name="Griffiths-Jones S."/>
            <person name="Doonan J.H."/>
            <person name="Yu J."/>
            <person name="Vienken K."/>
            <person name="Pain A."/>
            <person name="Freitag M."/>
            <person name="Selker E.U."/>
            <person name="Archer D.B."/>
            <person name="Penalva M.A."/>
            <person name="Oakley B.R."/>
            <person name="Momany M."/>
            <person name="Tanaka T."/>
            <person name="Kumagai T."/>
            <person name="Asai K."/>
            <person name="Machida M."/>
            <person name="Nierman W.C."/>
            <person name="Denning D.W."/>
            <person name="Caddick M.X."/>
            <person name="Hynes M."/>
            <person name="Paoletti M."/>
            <person name="Fischer R."/>
            <person name="Miller B.L."/>
            <person name="Dyer P.S."/>
            <person name="Sachs M.S."/>
            <person name="Osmani S.A."/>
            <person name="Birren B.W."/>
        </authorList>
    </citation>
    <scope>NUCLEOTIDE SEQUENCE [LARGE SCALE GENOMIC DNA]</scope>
    <source>
        <strain>FGSC A4 / ATCC 38163 / CBS 112.46 / NRRL 194 / M139</strain>
    </source>
</reference>
<reference key="2">
    <citation type="journal article" date="2009" name="Fungal Genet. Biol.">
        <title>The 2008 update of the Aspergillus nidulans genome annotation: a community effort.</title>
        <authorList>
            <person name="Wortman J.R."/>
            <person name="Gilsenan J.M."/>
            <person name="Joardar V."/>
            <person name="Deegan J."/>
            <person name="Clutterbuck J."/>
            <person name="Andersen M.R."/>
            <person name="Archer D."/>
            <person name="Bencina M."/>
            <person name="Braus G."/>
            <person name="Coutinho P."/>
            <person name="von Dohren H."/>
            <person name="Doonan J."/>
            <person name="Driessen A.J."/>
            <person name="Durek P."/>
            <person name="Espeso E."/>
            <person name="Fekete E."/>
            <person name="Flipphi M."/>
            <person name="Estrada C.G."/>
            <person name="Geysens S."/>
            <person name="Goldman G."/>
            <person name="de Groot P.W."/>
            <person name="Hansen K."/>
            <person name="Harris S.D."/>
            <person name="Heinekamp T."/>
            <person name="Helmstaedt K."/>
            <person name="Henrissat B."/>
            <person name="Hofmann G."/>
            <person name="Homan T."/>
            <person name="Horio T."/>
            <person name="Horiuchi H."/>
            <person name="James S."/>
            <person name="Jones M."/>
            <person name="Karaffa L."/>
            <person name="Karanyi Z."/>
            <person name="Kato M."/>
            <person name="Keller N."/>
            <person name="Kelly D.E."/>
            <person name="Kiel J.A."/>
            <person name="Kim J.M."/>
            <person name="van der Klei I.J."/>
            <person name="Klis F.M."/>
            <person name="Kovalchuk A."/>
            <person name="Krasevec N."/>
            <person name="Kubicek C.P."/>
            <person name="Liu B."/>
            <person name="Maccabe A."/>
            <person name="Meyer V."/>
            <person name="Mirabito P."/>
            <person name="Miskei M."/>
            <person name="Mos M."/>
            <person name="Mullins J."/>
            <person name="Nelson D.R."/>
            <person name="Nielsen J."/>
            <person name="Oakley B.R."/>
            <person name="Osmani S.A."/>
            <person name="Pakula T."/>
            <person name="Paszewski A."/>
            <person name="Paulsen I."/>
            <person name="Pilsyk S."/>
            <person name="Pocsi I."/>
            <person name="Punt P.J."/>
            <person name="Ram A.F."/>
            <person name="Ren Q."/>
            <person name="Robellet X."/>
            <person name="Robson G."/>
            <person name="Seiboth B."/>
            <person name="van Solingen P."/>
            <person name="Specht T."/>
            <person name="Sun J."/>
            <person name="Taheri-Talesh N."/>
            <person name="Takeshita N."/>
            <person name="Ussery D."/>
            <person name="vanKuyk P.A."/>
            <person name="Visser H."/>
            <person name="van de Vondervoort P.J."/>
            <person name="de Vries R.P."/>
            <person name="Walton J."/>
            <person name="Xiang X."/>
            <person name="Xiong Y."/>
            <person name="Zeng A.P."/>
            <person name="Brandt B.W."/>
            <person name="Cornell M.J."/>
            <person name="van den Hondel C.A."/>
            <person name="Visser J."/>
            <person name="Oliver S.G."/>
            <person name="Turner G."/>
        </authorList>
    </citation>
    <scope>GENOME REANNOTATION</scope>
    <source>
        <strain>FGSC A4 / ATCC 38163 / CBS 112.46 / NRRL 194 / M139</strain>
    </source>
</reference>
<keyword id="KW-0067">ATP-binding</keyword>
<keyword id="KW-0347">Helicase</keyword>
<keyword id="KW-0378">Hydrolase</keyword>
<keyword id="KW-0496">Mitochondrion</keyword>
<keyword id="KW-0547">Nucleotide-binding</keyword>
<keyword id="KW-1185">Reference proteome</keyword>
<keyword id="KW-0694">RNA-binding</keyword>
<keyword id="KW-0809">Transit peptide</keyword>
<dbReference type="EC" id="3.6.4.13"/>
<dbReference type="EMBL" id="AACD01000105">
    <property type="protein sequence ID" value="EAA57935.1"/>
    <property type="molecule type" value="Genomic_DNA"/>
</dbReference>
<dbReference type="EMBL" id="BN001301">
    <property type="protein sequence ID" value="CBF70085.1"/>
    <property type="molecule type" value="Genomic_DNA"/>
</dbReference>
<dbReference type="RefSeq" id="XP_663753.1">
    <property type="nucleotide sequence ID" value="XM_658661.1"/>
</dbReference>
<dbReference type="SMR" id="Q5AZY1"/>
<dbReference type="FunCoup" id="Q5AZY1">
    <property type="interactions" value="106"/>
</dbReference>
<dbReference type="STRING" id="227321.Q5AZY1"/>
<dbReference type="EnsemblFungi" id="CBF70085">
    <property type="protein sequence ID" value="CBF70085"/>
    <property type="gene ID" value="ANIA_06149"/>
</dbReference>
<dbReference type="KEGG" id="ani:ANIA_06149"/>
<dbReference type="VEuPathDB" id="FungiDB:AN6149"/>
<dbReference type="eggNOG" id="KOG0335">
    <property type="taxonomic scope" value="Eukaryota"/>
</dbReference>
<dbReference type="HOGENOM" id="CLU_003041_18_0_1"/>
<dbReference type="InParanoid" id="Q5AZY1"/>
<dbReference type="OMA" id="HSTIDFI"/>
<dbReference type="OrthoDB" id="10256233at2759"/>
<dbReference type="Proteomes" id="UP000000560">
    <property type="component" value="Chromosome I"/>
</dbReference>
<dbReference type="GO" id="GO:0005739">
    <property type="term" value="C:mitochondrion"/>
    <property type="evidence" value="ECO:0007669"/>
    <property type="project" value="UniProtKB-SubCell"/>
</dbReference>
<dbReference type="GO" id="GO:0005730">
    <property type="term" value="C:nucleolus"/>
    <property type="evidence" value="ECO:0000318"/>
    <property type="project" value="GO_Central"/>
</dbReference>
<dbReference type="GO" id="GO:0005524">
    <property type="term" value="F:ATP binding"/>
    <property type="evidence" value="ECO:0007669"/>
    <property type="project" value="UniProtKB-KW"/>
</dbReference>
<dbReference type="GO" id="GO:0016887">
    <property type="term" value="F:ATP hydrolysis activity"/>
    <property type="evidence" value="ECO:0007669"/>
    <property type="project" value="RHEA"/>
</dbReference>
<dbReference type="GO" id="GO:0003723">
    <property type="term" value="F:RNA binding"/>
    <property type="evidence" value="ECO:0007669"/>
    <property type="project" value="UniProtKB-KW"/>
</dbReference>
<dbReference type="GO" id="GO:0003724">
    <property type="term" value="F:RNA helicase activity"/>
    <property type="evidence" value="ECO:0007669"/>
    <property type="project" value="UniProtKB-EC"/>
</dbReference>
<dbReference type="GO" id="GO:0000463">
    <property type="term" value="P:maturation of LSU-rRNA from tricistronic rRNA transcript (SSU-rRNA, 5.8S rRNA, LSU-rRNA)"/>
    <property type="evidence" value="ECO:0000318"/>
    <property type="project" value="GO_Central"/>
</dbReference>
<dbReference type="CDD" id="cd18787">
    <property type="entry name" value="SF2_C_DEAD"/>
    <property type="match status" value="1"/>
</dbReference>
<dbReference type="Gene3D" id="3.40.50.300">
    <property type="entry name" value="P-loop containing nucleotide triphosphate hydrolases"/>
    <property type="match status" value="2"/>
</dbReference>
<dbReference type="InterPro" id="IPR011545">
    <property type="entry name" value="DEAD/DEAH_box_helicase_dom"/>
</dbReference>
<dbReference type="InterPro" id="IPR014001">
    <property type="entry name" value="Helicase_ATP-bd"/>
</dbReference>
<dbReference type="InterPro" id="IPR001650">
    <property type="entry name" value="Helicase_C-like"/>
</dbReference>
<dbReference type="InterPro" id="IPR027417">
    <property type="entry name" value="P-loop_NTPase"/>
</dbReference>
<dbReference type="PANTHER" id="PTHR47960">
    <property type="entry name" value="DEAD-BOX ATP-DEPENDENT RNA HELICASE 50"/>
    <property type="match status" value="1"/>
</dbReference>
<dbReference type="Pfam" id="PF00270">
    <property type="entry name" value="DEAD"/>
    <property type="match status" value="1"/>
</dbReference>
<dbReference type="Pfam" id="PF00271">
    <property type="entry name" value="Helicase_C"/>
    <property type="match status" value="1"/>
</dbReference>
<dbReference type="SMART" id="SM00487">
    <property type="entry name" value="DEXDc"/>
    <property type="match status" value="1"/>
</dbReference>
<dbReference type="SMART" id="SM00490">
    <property type="entry name" value="HELICc"/>
    <property type="match status" value="1"/>
</dbReference>
<dbReference type="SUPFAM" id="SSF52540">
    <property type="entry name" value="P-loop containing nucleoside triphosphate hydrolases"/>
    <property type="match status" value="1"/>
</dbReference>
<dbReference type="PROSITE" id="PS51192">
    <property type="entry name" value="HELICASE_ATP_BIND_1"/>
    <property type="match status" value="1"/>
</dbReference>
<dbReference type="PROSITE" id="PS51194">
    <property type="entry name" value="HELICASE_CTER"/>
    <property type="match status" value="1"/>
</dbReference>
<sequence length="630" mass="70100">MNRLGGLSLPLRPVCLFCRAQTSLALSPLQGGQAVRSIATGRLRRRARMTLSKDVAKSSLKPKRTDRGKLGPFPNMNQTRARVREDPRSRSPAALKRSGETEEKPAMNTESPLYKALKMQTALAPISYGKRTAIKAKIAEITSFDAFTLLPIVRNSIFSQALPGIADAVPTPIQRVAIPRLLEDAPAKKQAKKVDDDEPQYEQYLLAAETGSGKTLAYLIPVIDAIKRQEIQEKEMEKKEEERKVREREENKKNQAFDLEPEIPPPSNAGRPRAIILVPTAELVAQVGAKLKAFAHTVKFRSGIISSNLTPRRIKSTLFNPAGIDILVSTPHLLASIAKTDPYVLSRVSHLVLDEADSLMDRSFLPISTEVISKAAPSLQKLIFCSATIPRSLDSQLRKLYPDIWRLTTPNLHAIPRRVQLGVVDIQKDPYRGNRNLACADVIWSIGKSGAGSDEAGSPWSEPKTKKILVFVNEREEADEVAQFLKSKGIDAHSFNRDSGTRKQEEILAEFTEPAAVPTAEEILLARKQQQRENINIPFVLPERTNRDTERRLDGVKVLVTTDIASRGIDTLALKTVILYHVPHTTIDFIHRLGRLGRMGKRGRAVVLVGKKDRKDVVKEVREVWFGLDS</sequence>